<accession>P31164</accession>
<accession>A0A0K9RPN0</accession>
<proteinExistence type="evidence at protein level"/>
<organism>
    <name type="scientific">Spinacia oleracea</name>
    <name type="common">Spinach</name>
    <dbReference type="NCBI Taxonomy" id="3562"/>
    <lineage>
        <taxon>Eukaryota</taxon>
        <taxon>Viridiplantae</taxon>
        <taxon>Streptophyta</taxon>
        <taxon>Embryophyta</taxon>
        <taxon>Tracheophyta</taxon>
        <taxon>Spermatophyta</taxon>
        <taxon>Magnoliopsida</taxon>
        <taxon>eudicotyledons</taxon>
        <taxon>Gunneridae</taxon>
        <taxon>Pentapetalae</taxon>
        <taxon>Caryophyllales</taxon>
        <taxon>Chenopodiaceae</taxon>
        <taxon>Chenopodioideae</taxon>
        <taxon>Anserineae</taxon>
        <taxon>Spinacia</taxon>
    </lineage>
</organism>
<gene>
    <name type="primary">rpl11</name>
    <name type="ORF">SOVF_048900</name>
</gene>
<feature type="transit peptide" description="Chloroplast" evidence="1">
    <location>
        <begin position="1"/>
        <end position="66"/>
    </location>
</feature>
<feature type="chain" id="PRO_0000030442" description="Large ribosomal subunit protein uL11c">
    <location>
        <begin position="67"/>
        <end position="224"/>
    </location>
</feature>
<feature type="modified residue" description="N6,N6,N6-trimethyllysine" evidence="1">
    <location>
        <position position="75"/>
    </location>
</feature>
<feature type="modified residue" description="N6,N6,N6-trimethyllysine" evidence="1">
    <location>
        <position position="111"/>
    </location>
</feature>
<feature type="strand" evidence="8">
    <location>
        <begin position="80"/>
        <end position="84"/>
    </location>
</feature>
<feature type="turn" evidence="8">
    <location>
        <begin position="92"/>
        <end position="95"/>
    </location>
</feature>
<feature type="helix" evidence="8">
    <location>
        <begin position="96"/>
        <end position="100"/>
    </location>
</feature>
<feature type="turn" evidence="8">
    <location>
        <begin position="101"/>
        <end position="103"/>
    </location>
</feature>
<feature type="helix" evidence="8">
    <location>
        <begin position="106"/>
        <end position="119"/>
    </location>
</feature>
<feature type="strand" evidence="8">
    <location>
        <begin position="125"/>
        <end position="131"/>
    </location>
</feature>
<feature type="strand" evidence="8">
    <location>
        <begin position="137"/>
        <end position="141"/>
    </location>
</feature>
<feature type="helix" evidence="8">
    <location>
        <begin position="146"/>
        <end position="153"/>
    </location>
</feature>
<feature type="turn" evidence="8">
    <location>
        <begin position="163"/>
        <end position="165"/>
    </location>
</feature>
<feature type="helix" evidence="8">
    <location>
        <begin position="173"/>
        <end position="182"/>
    </location>
</feature>
<feature type="helix" evidence="8">
    <location>
        <begin position="184"/>
        <end position="186"/>
    </location>
</feature>
<feature type="helix" evidence="8">
    <location>
        <begin position="192"/>
        <end position="206"/>
    </location>
</feature>
<reference key="1">
    <citation type="journal article" date="1991" name="Biochimie">
        <title>The nuclear:organelle distribution of chloroplast ribosomal proteins genes. Features of a cDNA clone encoding the cytoplasmic precursor of L11.</title>
        <authorList>
            <person name="Smooker P.M."/>
            <person name="Schmidt J."/>
            <person name="Subramanian A.R."/>
        </authorList>
    </citation>
    <scope>NUCLEOTIDE SEQUENCE [MRNA]</scope>
    <source>
        <strain>cv. Matador</strain>
        <tissue>Leaf</tissue>
    </source>
</reference>
<reference key="2">
    <citation type="journal article" date="2014" name="Nature">
        <title>The genome of the recently domesticated crop plant sugar beet (Beta vulgaris).</title>
        <authorList>
            <person name="Dohm J.C."/>
            <person name="Minoche A.E."/>
            <person name="Holtgraewe D."/>
            <person name="Capella-Gutierrez S."/>
            <person name="Zakrzewski F."/>
            <person name="Tafer H."/>
            <person name="Rupp O."/>
            <person name="Soerensen T.R."/>
            <person name="Stracke R."/>
            <person name="Reinhardt R."/>
            <person name="Goesmann A."/>
            <person name="Kraft T."/>
            <person name="Schulz B."/>
            <person name="Stadler P.F."/>
            <person name="Schmidt T."/>
            <person name="Gabaldon T."/>
            <person name="Lehrach H."/>
            <person name="Weisshaar B."/>
            <person name="Himmelbauer H."/>
        </authorList>
    </citation>
    <scope>NUCLEOTIDE SEQUENCE [LARGE SCALE GENOMIC DNA]</scope>
    <source>
        <strain>cv. Viroflay</strain>
        <tissue>Leaf</tissue>
    </source>
</reference>
<reference key="3">
    <citation type="journal article" date="2000" name="J. Biol. Chem.">
        <title>The plastid ribosomal proteins. Identification of all the proteins in the 50S subunit of an organelle ribosome (chloroplast).</title>
        <authorList>
            <person name="Yamaguchi K."/>
            <person name="Subramanian A.R."/>
        </authorList>
    </citation>
    <scope>PROTEIN SEQUENCE OF 67-72</scope>
    <scope>SUBUNIT</scope>
    <scope>SUBCELLULAR LOCATION</scope>
    <scope>MASS SPECTROMETRY</scope>
    <scope>METHYLATION AT LYS-75 AND LYS-111</scope>
    <source>
        <strain>cv. Alwaro</strain>
        <tissue>Leaf</tissue>
    </source>
</reference>
<reference key="4">
    <citation type="journal article" date="2007" name="Proc. Natl. Acad. Sci. U.S.A.">
        <title>Cryo-EM study of the spinach chloroplast ribosome reveals the structural and functional roles of plastid-specific ribosomal proteins.</title>
        <authorList>
            <person name="Sharma M.R."/>
            <person name="Wilson D.N."/>
            <person name="Datta P.P."/>
            <person name="Barat C."/>
            <person name="Schluenzen F."/>
            <person name="Fucini P."/>
            <person name="Agrawal R.K."/>
        </authorList>
    </citation>
    <scope>STRUCTURE BY ELECTRON MICROSCOPY (9.4 ANGSTROMS)</scope>
</reference>
<reference key="5">
    <citation type="journal article" date="2017" name="EMBO J.">
        <title>The complete structure of the chloroplast 70S ribosome in complex with translation factor pY.</title>
        <authorList>
            <person name="Bieri P."/>
            <person name="Leibundgut M."/>
            <person name="Saurer M."/>
            <person name="Boehringer D."/>
            <person name="Ban N."/>
        </authorList>
    </citation>
    <scope>STRUCTURE BY ELECTRON MICROSCOPY (3.25 ANGSTROMS)</scope>
    <scope>SUBUNIT</scope>
    <scope>SUBCELLULAR LOCATION</scope>
</reference>
<name>RK11_SPIOL</name>
<comment type="function">
    <text evidence="6 7">Component of the chloroplast ribosome (chloro-ribosome), a dedicated translation machinery responsible for the synthesis of chloroplast genome-encoded proteins, including proteins of the transcription and translation machinery and components of the photosynthetic apparatus.</text>
</comment>
<comment type="subunit">
    <text evidence="1 2">Component of the chloroplast large ribosomal subunit (LSU). Mature 70S chloroplast ribosomes of higher plants consist of a small (30S) and a large (50S) subunit. The 30S small subunit contains 1 molecule of ribosomal RNA (16S rRNA) and 24 different proteins. The 50S large subunit contains 3 rRNA molecules (23S, 5S and 4.5S rRNA) and 33 different proteins.</text>
</comment>
<comment type="subcellular location">
    <subcellularLocation>
        <location evidence="1 2">Plastid</location>
        <location evidence="1 2">Chloroplast</location>
    </subcellularLocation>
</comment>
<comment type="mass spectrometry"/>
<comment type="similarity">
    <text evidence="5">Belongs to the universal ribosomal protein uL11 family.</text>
</comment>
<sequence>MAQPLVAAPSSSSITSPIPRKLCSSLLTPSSLSLSSNPRNSLQFLNSKLFLSPPSTSHRRLSIVAMAPKPGKAKKVIGVIKLALEAGKATPAPPVGPALGSKGVNIMAFCKDYNARTADKPGFVIPVEITVFDDKSFTFILKTPPASVLLLKASGAEKGSKDPQMEKVGKITIDQLRGIATEKLPDLNCTTIESAMRIIAGTAANMGIDIDPPILVKKKKEVIF</sequence>
<protein>
    <recommendedName>
        <fullName evidence="4">Large ribosomal subunit protein uL11c</fullName>
    </recommendedName>
    <alternativeName>
        <fullName evidence="3">50S ribosomal protein L11, chloroplastic</fullName>
    </alternativeName>
    <alternativeName>
        <fullName>CL11</fullName>
    </alternativeName>
</protein>
<keyword id="KW-0002">3D-structure</keyword>
<keyword id="KW-0150">Chloroplast</keyword>
<keyword id="KW-0903">Direct protein sequencing</keyword>
<keyword id="KW-0488">Methylation</keyword>
<keyword id="KW-0934">Plastid</keyword>
<keyword id="KW-1185">Reference proteome</keyword>
<keyword id="KW-0687">Ribonucleoprotein</keyword>
<keyword id="KW-0689">Ribosomal protein</keyword>
<keyword id="KW-0694">RNA-binding</keyword>
<keyword id="KW-0699">rRNA-binding</keyword>
<keyword id="KW-0809">Transit peptide</keyword>
<evidence type="ECO:0000269" key="1">
    <source>
    </source>
</evidence>
<evidence type="ECO:0000269" key="2">
    <source>
    </source>
</evidence>
<evidence type="ECO:0000303" key="3">
    <source>
    </source>
</evidence>
<evidence type="ECO:0000303" key="4">
    <source>
    </source>
</evidence>
<evidence type="ECO:0000305" key="5"/>
<evidence type="ECO:0000305" key="6">
    <source>
    </source>
</evidence>
<evidence type="ECO:0000305" key="7">
    <source>
    </source>
</evidence>
<evidence type="ECO:0007829" key="8">
    <source>
        <dbReference type="PDB" id="5MMI"/>
    </source>
</evidence>
<dbReference type="EMBL" id="X56615">
    <property type="protein sequence ID" value="CAA39950.1"/>
    <property type="molecule type" value="mRNA"/>
</dbReference>
<dbReference type="EMBL" id="KQ138260">
    <property type="protein sequence ID" value="KNA20797.1"/>
    <property type="molecule type" value="Genomic_DNA"/>
</dbReference>
<dbReference type="PIR" id="S23238">
    <property type="entry name" value="R5SP11"/>
</dbReference>
<dbReference type="PDB" id="4V61">
    <property type="method" value="EM"/>
    <property type="resolution" value="9.40 A"/>
    <property type="chains" value="BK=1-224"/>
</dbReference>
<dbReference type="PDB" id="5MMI">
    <property type="method" value="EM"/>
    <property type="resolution" value="3.25 A"/>
    <property type="chains" value="J=1-224"/>
</dbReference>
<dbReference type="PDB" id="5MMM">
    <property type="method" value="EM"/>
    <property type="resolution" value="3.40 A"/>
    <property type="chains" value="J=1-224"/>
</dbReference>
<dbReference type="PDBsum" id="4V61"/>
<dbReference type="PDBsum" id="5MMI"/>
<dbReference type="PDBsum" id="5MMM"/>
<dbReference type="EMDB" id="EMD-3531"/>
<dbReference type="EMDB" id="EMD-3533"/>
<dbReference type="SMR" id="P31164"/>
<dbReference type="STRING" id="3562.P31164"/>
<dbReference type="OrthoDB" id="1091498at2759"/>
<dbReference type="Proteomes" id="UP001155700">
    <property type="component" value="Unplaced"/>
</dbReference>
<dbReference type="GO" id="GO:0009507">
    <property type="term" value="C:chloroplast"/>
    <property type="evidence" value="ECO:0007669"/>
    <property type="project" value="UniProtKB-SubCell"/>
</dbReference>
<dbReference type="GO" id="GO:0022625">
    <property type="term" value="C:cytosolic large ribosomal subunit"/>
    <property type="evidence" value="ECO:0000318"/>
    <property type="project" value="GO_Central"/>
</dbReference>
<dbReference type="GO" id="GO:0070180">
    <property type="term" value="F:large ribosomal subunit rRNA binding"/>
    <property type="evidence" value="ECO:0000318"/>
    <property type="project" value="GO_Central"/>
</dbReference>
<dbReference type="GO" id="GO:0003735">
    <property type="term" value="F:structural constituent of ribosome"/>
    <property type="evidence" value="ECO:0000318"/>
    <property type="project" value="GO_Central"/>
</dbReference>
<dbReference type="GO" id="GO:0006412">
    <property type="term" value="P:translation"/>
    <property type="evidence" value="ECO:0000318"/>
    <property type="project" value="GO_Central"/>
</dbReference>
<dbReference type="CDD" id="cd00349">
    <property type="entry name" value="Ribosomal_L11"/>
    <property type="match status" value="1"/>
</dbReference>
<dbReference type="FunFam" id="1.10.10.250:FF:000001">
    <property type="entry name" value="50S ribosomal protein L11"/>
    <property type="match status" value="1"/>
</dbReference>
<dbReference type="FunFam" id="3.30.1550.10:FF:000001">
    <property type="entry name" value="50S ribosomal protein L11"/>
    <property type="match status" value="1"/>
</dbReference>
<dbReference type="Gene3D" id="1.10.10.250">
    <property type="entry name" value="Ribosomal protein L11, C-terminal domain"/>
    <property type="match status" value="1"/>
</dbReference>
<dbReference type="Gene3D" id="3.30.1550.10">
    <property type="entry name" value="Ribosomal protein L11/L12, N-terminal domain"/>
    <property type="match status" value="1"/>
</dbReference>
<dbReference type="HAMAP" id="MF_00736">
    <property type="entry name" value="Ribosomal_uL11"/>
    <property type="match status" value="1"/>
</dbReference>
<dbReference type="InterPro" id="IPR000911">
    <property type="entry name" value="Ribosomal_uL11"/>
</dbReference>
<dbReference type="InterPro" id="IPR006519">
    <property type="entry name" value="Ribosomal_uL11_bac-typ"/>
</dbReference>
<dbReference type="InterPro" id="IPR020783">
    <property type="entry name" value="Ribosomal_uL11_C"/>
</dbReference>
<dbReference type="InterPro" id="IPR036769">
    <property type="entry name" value="Ribosomal_uL11_C_sf"/>
</dbReference>
<dbReference type="InterPro" id="IPR020785">
    <property type="entry name" value="Ribosomal_uL11_CS"/>
</dbReference>
<dbReference type="InterPro" id="IPR020784">
    <property type="entry name" value="Ribosomal_uL11_N"/>
</dbReference>
<dbReference type="InterPro" id="IPR036796">
    <property type="entry name" value="Ribosomal_uL11_N_sf"/>
</dbReference>
<dbReference type="NCBIfam" id="TIGR01632">
    <property type="entry name" value="L11_bact"/>
    <property type="match status" value="1"/>
</dbReference>
<dbReference type="PANTHER" id="PTHR11661">
    <property type="entry name" value="60S RIBOSOMAL PROTEIN L12"/>
    <property type="match status" value="1"/>
</dbReference>
<dbReference type="PANTHER" id="PTHR11661:SF1">
    <property type="entry name" value="LARGE RIBOSOMAL SUBUNIT PROTEIN UL11M"/>
    <property type="match status" value="1"/>
</dbReference>
<dbReference type="Pfam" id="PF00298">
    <property type="entry name" value="Ribosomal_L11"/>
    <property type="match status" value="1"/>
</dbReference>
<dbReference type="Pfam" id="PF03946">
    <property type="entry name" value="Ribosomal_L11_N"/>
    <property type="match status" value="1"/>
</dbReference>
<dbReference type="SMART" id="SM00649">
    <property type="entry name" value="RL11"/>
    <property type="match status" value="1"/>
</dbReference>
<dbReference type="SUPFAM" id="SSF54747">
    <property type="entry name" value="Ribosomal L11/L12e N-terminal domain"/>
    <property type="match status" value="1"/>
</dbReference>
<dbReference type="SUPFAM" id="SSF46906">
    <property type="entry name" value="Ribosomal protein L11, C-terminal domain"/>
    <property type="match status" value="1"/>
</dbReference>
<dbReference type="PROSITE" id="PS00359">
    <property type="entry name" value="RIBOSOMAL_L11"/>
    <property type="match status" value="1"/>
</dbReference>